<keyword id="KW-0067">ATP-binding</keyword>
<keyword id="KW-1184">Jasmonic acid signaling pathway</keyword>
<keyword id="KW-0436">Ligase</keyword>
<keyword id="KW-0547">Nucleotide-binding</keyword>
<keyword id="KW-0611">Plant defense</keyword>
<keyword id="KW-1185">Reference proteome</keyword>
<protein>
    <recommendedName>
        <fullName evidence="3">Jasmonoyl--L-amino acid synthetase JAR6</fullName>
        <ecNumber evidence="2">6.3.2.52</ecNumber>
    </recommendedName>
    <alternativeName>
        <fullName evidence="3">Jasmonate-amino acid synthetase JAR6</fullName>
    </alternativeName>
    <alternativeName>
        <fullName evidence="3">Jasmonic acid-amido synthetase JAR6</fullName>
    </alternativeName>
    <alternativeName>
        <fullName evidence="3">Protein JASMONATE RESISTANT 6</fullName>
    </alternativeName>
</protein>
<comment type="function">
    <text evidence="2">Catalyzes the synthesis of jasmonate-amino acid conjugates by adenylation (PubMed:17273867). Catalyzes the conjugation of jasmonate (JA) to Ile, Leu and Val (PubMed:17273867). Catalyzes the conjugation of JA to Ile that may mediate defense signaling and resistance to the herbivore Manduca sexta caterpillars (PubMed:17273867).</text>
</comment>
<comment type="catalytic activity">
    <reaction evidence="2">
        <text>a jasmonate + an L-alpha-amino acid + ATP = a jasmonyl-L-amino acid + AMP + diphosphate + H(+)</text>
        <dbReference type="Rhea" id="RHEA:55772"/>
        <dbReference type="ChEBI" id="CHEBI:15378"/>
        <dbReference type="ChEBI" id="CHEBI:30616"/>
        <dbReference type="ChEBI" id="CHEBI:33019"/>
        <dbReference type="ChEBI" id="CHEBI:59869"/>
        <dbReference type="ChEBI" id="CHEBI:136183"/>
        <dbReference type="ChEBI" id="CHEBI:136184"/>
        <dbReference type="ChEBI" id="CHEBI:456215"/>
        <dbReference type="EC" id="6.3.2.52"/>
    </reaction>
</comment>
<comment type="induction">
    <text evidence="2">Induced by wounding and oral secretion of the herbivore Manduca sexta caterpillars.</text>
</comment>
<comment type="similarity">
    <text evidence="3">Belongs to the IAA-amido conjugating enzyme family.</text>
</comment>
<comment type="sequence caution" evidence="3">
    <conflict type="erroneous initiation">
        <sequence resource="EMBL-CDS" id="OIT32368"/>
    </conflict>
    <text>Extended N-terminus.</text>
</comment>
<organism>
    <name type="scientific">Nicotiana attenuata</name>
    <name type="common">Coyote tobacco</name>
    <dbReference type="NCBI Taxonomy" id="49451"/>
    <lineage>
        <taxon>Eukaryota</taxon>
        <taxon>Viridiplantae</taxon>
        <taxon>Streptophyta</taxon>
        <taxon>Embryophyta</taxon>
        <taxon>Tracheophyta</taxon>
        <taxon>Spermatophyta</taxon>
        <taxon>Magnoliopsida</taxon>
        <taxon>eudicotyledons</taxon>
        <taxon>Gunneridae</taxon>
        <taxon>Pentapetalae</taxon>
        <taxon>asterids</taxon>
        <taxon>lamiids</taxon>
        <taxon>Solanales</taxon>
        <taxon>Solanaceae</taxon>
        <taxon>Nicotianoideae</taxon>
        <taxon>Nicotianeae</taxon>
        <taxon>Nicotiana</taxon>
    </lineage>
</organism>
<accession>A0A314KSQ4</accession>
<accession>B0VXR3</accession>
<sequence>MKMLVEKIEKKFDQEKVIEEFEDLTKDAGKIQEETLKKILEQNGGTEYLQLWGLNGRTDPQTFKNCVPIVTHNDLEPYIQRIADGDLSPILTGKPIETISLSSGTTQGKPKFVPFNDELMESTMQIFKTSFAFRNREFPIGNGKALQFIYSSKQFKTKGGLAAGTATTNVYRNAQFKKTMKAMCTPCCSPDEVIFGPDFHQSLYCHLLCGLIFHDEVQVVSSTFAHSIVHAFRTFEQVWEALVVDIREGVLSSRVTVPSIRLAMSKLLKPDPELADTIYNKCSRLSNWYGLIPDLFPNTRYIYGIMTGSMEPYLKKLRHYAGELPLLSADYGSSEGWVGVNVNPKLPPELVTYAVLPNIGYFEFIPLGGNLNGIEQANSPVGLTEVKLGEEYEVVFTNFAGLYRYRLGDVVKVKGFHNGTPELQFVCRSNLLLSINIDKNTEKDLQLAVEAAAKRLVDEKLEVVDFTSHVNVSADPGHYVIFWELSGEATDEMLQDCCNCLDRSFIDAGYVSSRKVNAIGALELRIVKRGTFHKILDHFVGLGGAVSQFKTPRCVGPKNSSLLQILSSNVVETYVSTAFC</sequence>
<proteinExistence type="evidence at protein level"/>
<reference key="1">
    <citation type="journal article" date="2007" name="Planta">
        <title>Independently silencing two JAR family members impairs levels of trypsin proteinase inhibitors but not nicotine.</title>
        <authorList>
            <person name="Wang L."/>
            <person name="Halitschke R."/>
            <person name="Kang J.H."/>
            <person name="Berg A."/>
            <person name="Harnisch F."/>
            <person name="Baldwin I.T."/>
        </authorList>
    </citation>
    <scope>NUCLEOTIDE SEQUENCE [MRNA]</scope>
    <scope>FUNCTION</scope>
    <scope>CATALYTIC ACTIVITY</scope>
    <scope>INDUCTION</scope>
</reference>
<reference key="2">
    <citation type="journal article" date="2017" name="Proc. Natl. Acad. Sci. U.S.A.">
        <title>Wild tobacco genomes reveal the evolution of nicotine biosynthesis.</title>
        <authorList>
            <person name="Xu S."/>
            <person name="Brockmoeller T."/>
            <person name="Navarro-Quezada A."/>
            <person name="Kuhl H."/>
            <person name="Gase K."/>
            <person name="Ling Z."/>
            <person name="Zhou W."/>
            <person name="Kreitzer C."/>
            <person name="Stanke M."/>
            <person name="Tang H."/>
            <person name="Lyons E."/>
            <person name="Pandey P."/>
            <person name="Pandey S.P."/>
            <person name="Timmermann B."/>
            <person name="Gaquerel E."/>
            <person name="Baldwin I.T."/>
        </authorList>
    </citation>
    <scope>NUCLEOTIDE SEQUENCE [LARGE SCALE GENOMIC DNA]</scope>
</reference>
<evidence type="ECO:0000250" key="1">
    <source>
        <dbReference type="UniProtKB" id="Q9SKE2"/>
    </source>
</evidence>
<evidence type="ECO:0000269" key="2">
    <source>
    </source>
</evidence>
<evidence type="ECO:0000305" key="3"/>
<evidence type="ECO:0000312" key="4">
    <source>
        <dbReference type="EMBL" id="OIT32368.1"/>
    </source>
</evidence>
<gene>
    <name type="primary">JAR6</name>
    <name evidence="4" type="ORF">A4A49_19048</name>
</gene>
<feature type="chain" id="PRO_0000446307" description="Jasmonoyl--L-amino acid synthetase JAR6">
    <location>
        <begin position="1"/>
        <end position="580"/>
    </location>
</feature>
<feature type="binding site" evidence="1">
    <location>
        <position position="100"/>
    </location>
    <ligand>
        <name>ATP</name>
        <dbReference type="ChEBI" id="CHEBI:30616"/>
    </ligand>
</feature>
<feature type="binding site" evidence="1">
    <location>
        <position position="103"/>
    </location>
    <ligand>
        <name>jasmonate</name>
        <dbReference type="ChEBI" id="CHEBI:58431"/>
    </ligand>
</feature>
<feature type="binding site" evidence="1">
    <location>
        <position position="120"/>
    </location>
    <ligand>
        <name>ATP</name>
        <dbReference type="ChEBI" id="CHEBI:30616"/>
    </ligand>
</feature>
<feature type="binding site" evidence="1">
    <location>
        <position position="123"/>
    </location>
    <ligand>
        <name>ATP</name>
        <dbReference type="ChEBI" id="CHEBI:30616"/>
    </ligand>
</feature>
<feature type="binding site" evidence="1">
    <location>
        <position position="164"/>
    </location>
    <ligand>
        <name>ATP</name>
        <dbReference type="ChEBI" id="CHEBI:30616"/>
    </ligand>
</feature>
<feature type="binding site" evidence="1">
    <location>
        <begin position="167"/>
        <end position="171"/>
    </location>
    <ligand>
        <name>an L-alpha-amino acid</name>
        <dbReference type="ChEBI" id="CHEBI:59869"/>
    </ligand>
</feature>
<feature type="binding site" evidence="1">
    <location>
        <position position="169"/>
    </location>
    <ligand>
        <name>ATP</name>
        <dbReference type="ChEBI" id="CHEBI:30616"/>
    </ligand>
</feature>
<feature type="binding site" evidence="1">
    <location>
        <begin position="329"/>
        <end position="332"/>
    </location>
    <ligand>
        <name>jasmonate</name>
        <dbReference type="ChEBI" id="CHEBI:58431"/>
    </ligand>
</feature>
<feature type="binding site" evidence="1">
    <location>
        <begin position="332"/>
        <end position="337"/>
    </location>
    <ligand>
        <name>ATP</name>
        <dbReference type="ChEBI" id="CHEBI:30616"/>
    </ligand>
</feature>
<feature type="binding site" evidence="1">
    <location>
        <begin position="534"/>
        <end position="538"/>
    </location>
    <ligand>
        <name>an L-alpha-amino acid</name>
        <dbReference type="ChEBI" id="CHEBI:59869"/>
    </ligand>
</feature>
<feature type="sequence conflict" description="In Ref. 1; ABC87761." evidence="3" ref="1">
    <original>R</original>
    <variation>K</variation>
    <location>
        <position position="247"/>
    </location>
</feature>
<feature type="sequence conflict" description="In Ref. 1; ABC87761." evidence="3" ref="1">
    <original>R</original>
    <variation>G</variation>
    <location>
        <position position="254"/>
    </location>
</feature>
<feature type="sequence conflict" description="In Ref. 1; ABC87761." evidence="3" ref="1">
    <original>F</original>
    <variation>S</variation>
    <location>
        <position position="532"/>
    </location>
</feature>
<dbReference type="EC" id="6.3.2.52" evidence="2"/>
<dbReference type="EMBL" id="DQ359730">
    <property type="protein sequence ID" value="ABC87761.1"/>
    <property type="molecule type" value="mRNA"/>
</dbReference>
<dbReference type="EMBL" id="MJEQ01001075">
    <property type="protein sequence ID" value="OIT32368.1"/>
    <property type="status" value="ALT_INIT"/>
    <property type="molecule type" value="Genomic_DNA"/>
</dbReference>
<dbReference type="RefSeq" id="XP_019225905.1">
    <property type="nucleotide sequence ID" value="XM_019370360.1"/>
</dbReference>
<dbReference type="SMR" id="A0A314KSQ4"/>
<dbReference type="STRING" id="49451.A0A314KSQ4"/>
<dbReference type="GeneID" id="109207440"/>
<dbReference type="KEGG" id="nau:109207440"/>
<dbReference type="OrthoDB" id="10004661at2759"/>
<dbReference type="Proteomes" id="UP000187609">
    <property type="component" value="Unassembled WGS sequence"/>
</dbReference>
<dbReference type="GO" id="GO:0005737">
    <property type="term" value="C:cytoplasm"/>
    <property type="evidence" value="ECO:0007669"/>
    <property type="project" value="TreeGrafter"/>
</dbReference>
<dbReference type="GO" id="GO:0005524">
    <property type="term" value="F:ATP binding"/>
    <property type="evidence" value="ECO:0007669"/>
    <property type="project" value="UniProtKB-KW"/>
</dbReference>
<dbReference type="GO" id="GO:0080123">
    <property type="term" value="F:jasmonoyl-L-amino acid ligase activity"/>
    <property type="evidence" value="ECO:0000314"/>
    <property type="project" value="UniProtKB"/>
</dbReference>
<dbReference type="GO" id="GO:0006952">
    <property type="term" value="P:defense response"/>
    <property type="evidence" value="ECO:0007669"/>
    <property type="project" value="UniProtKB-KW"/>
</dbReference>
<dbReference type="InterPro" id="IPR004993">
    <property type="entry name" value="GH3"/>
</dbReference>
<dbReference type="InterPro" id="IPR055378">
    <property type="entry name" value="GH3_C"/>
</dbReference>
<dbReference type="InterPro" id="IPR055377">
    <property type="entry name" value="GH3_M"/>
</dbReference>
<dbReference type="PANTHER" id="PTHR31901">
    <property type="entry name" value="GH3 DOMAIN-CONTAINING PROTEIN"/>
    <property type="match status" value="1"/>
</dbReference>
<dbReference type="PANTHER" id="PTHR31901:SF99">
    <property type="entry name" value="JASMONIC ACID-AMIDO SYNTHETASE JAR1-LIKE"/>
    <property type="match status" value="1"/>
</dbReference>
<dbReference type="Pfam" id="PF03321">
    <property type="entry name" value="GH3"/>
    <property type="match status" value="1"/>
</dbReference>
<dbReference type="Pfam" id="PF23572">
    <property type="entry name" value="GH3_C"/>
    <property type="match status" value="1"/>
</dbReference>
<dbReference type="Pfam" id="PF23571">
    <property type="entry name" value="GH3_M"/>
    <property type="match status" value="1"/>
</dbReference>
<name>JAR6_NICAT</name>